<sequence>MSVLSKYVDRIAEKCEHNGFTKHAFSYALVTSAILALTIKVTIPYVKNVNTTSSVRTQKGKTNGQLSPSTRDSSEEDFKLAEAEKLLVAQQLKKKATNNLVEPGLNKEFLKHLQMLAKIMIPQAFCYETGLLSVHTFCLISRTFLSIYVAALEGALVKFIVRKDIKQFALVLLKWFGIAIPATFVNSMIRFLESKLSLAFRTRLVRHSYRLYFKNQNYYRVSNLDGRIENADHRLTEDISVFANSVAHLYSSLTKPCFDLMLIGLALMRSSKKMKANIITGPALSIGVIALTAHILRIVSPKFGQLVSEEANRYGYLRHIHSRIITNAEEIAFYGGHKVEMQQLRQAYNRLVNQMTTIFNQKLWFIMLEQFFMKYVWSGTGMIMVSLPILTGSDVGLGTVPNTAISESRVSERTQYLTTARNLLISAADAIERLMSSYKEIVSLAGYTFRVAGMMDVFEETALGVYCKTSVMESNQSNGIIEFRNGKPIAKGRIIYSDDPKNMSISLRAVPVVTPNCDIVVPKLTLCIEPGVHLLITGPNGCGKSSLFRILSGLWPIYAGELHIPRPVKDVPCMFYIPQRPYMSIGSLCDQIIYPDTREDMKRKHITENELRSILKMVSLEHIAQRDSFDVVRDWKDILSGGEKQRMAIARLFYHRPRYALLDECTSAVSIDVESSIYEIAKGMGITLLTITHRPTLWKYHTHILEFDGLGNWQFRKMNSDEEQKGQFLS</sequence>
<accession>Q7JUN3</accession>
<keyword id="KW-0067">ATP-binding</keyword>
<keyword id="KW-0472">Membrane</keyword>
<keyword id="KW-0547">Nucleotide-binding</keyword>
<keyword id="KW-0576">Peroxisome</keyword>
<keyword id="KW-1185">Reference proteome</keyword>
<keyword id="KW-1278">Translocase</keyword>
<keyword id="KW-0812">Transmembrane</keyword>
<keyword id="KW-1133">Transmembrane helix</keyword>
<keyword id="KW-0813">Transport</keyword>
<comment type="function">
    <text evidence="1">Plays a role in the transport of free very-long-chain fatty acids (VLCFAs) as well as their CoA-esters across the peroxisomal membrane by acting as an ATP-specific binding subunit releasing ADP after ATP hydrolysis. Thus, plays a role in regulation of VLCFAs and energy metabolism namely, in the degradation and biosynthesis of fatty acids by beta-oxidation, mitochondrial function and microsomal fatty acid elongation.</text>
</comment>
<comment type="catalytic activity">
    <reaction evidence="1">
        <text>an acyl-CoA(out) + ATP + H2O = an acyl-CoA(in) + ADP + phosphate + H(+)</text>
        <dbReference type="Rhea" id="RHEA:15181"/>
        <dbReference type="ChEBI" id="CHEBI:15377"/>
        <dbReference type="ChEBI" id="CHEBI:15378"/>
        <dbReference type="ChEBI" id="CHEBI:30616"/>
        <dbReference type="ChEBI" id="CHEBI:43474"/>
        <dbReference type="ChEBI" id="CHEBI:58342"/>
        <dbReference type="ChEBI" id="CHEBI:456216"/>
        <dbReference type="EC" id="7.6.2.4"/>
    </reaction>
</comment>
<comment type="subcellular location">
    <subcellularLocation>
        <location evidence="1">Peroxisome membrane</location>
        <topology evidence="2">Multi-pass membrane protein</topology>
    </subcellularLocation>
</comment>
<comment type="disruption phenotype">
    <text evidence="5">RNAi-mediated knockdown survives to adulthood, but suffer from neurodegeneration including age-dependent retinal disorganization with retinal holes and pigment cell loss (PubMed:29739804). RNAi-mediated knockdown in the neurons results in a similar phenotype (PubMed:29739804). Effects are probably due to elevated levels of very long chain fatty acids (VLCFAs) (PubMed:29739804). In contrast, glial-specific RNAi-mediated knockdown results in no defect (PubMed:29739804).</text>
</comment>
<comment type="similarity">
    <text evidence="7">Belongs to the ABC transporter superfamily. ABCD family. Peroxisomal fatty acyl CoA transporter (TC 3.A.1.203) subfamily.</text>
</comment>
<dbReference type="EC" id="7.6.2.4" evidence="1"/>
<dbReference type="EMBL" id="AE014135">
    <property type="protein sequence ID" value="AAF59365.1"/>
    <property type="molecule type" value="Genomic_DNA"/>
</dbReference>
<dbReference type="EMBL" id="AE014135">
    <property type="protein sequence ID" value="AAF59366.1"/>
    <property type="molecule type" value="Genomic_DNA"/>
</dbReference>
<dbReference type="EMBL" id="AE014135">
    <property type="protein sequence ID" value="AAF59367.2"/>
    <property type="molecule type" value="Genomic_DNA"/>
</dbReference>
<dbReference type="EMBL" id="AE014135">
    <property type="protein sequence ID" value="AAN06515.1"/>
    <property type="molecule type" value="Genomic_DNA"/>
</dbReference>
<dbReference type="EMBL" id="AE014135">
    <property type="protein sequence ID" value="AAN06517.1"/>
    <property type="molecule type" value="Genomic_DNA"/>
</dbReference>
<dbReference type="EMBL" id="AE014135">
    <property type="protein sequence ID" value="AFH06769.1"/>
    <property type="molecule type" value="Genomic_DNA"/>
</dbReference>
<dbReference type="EMBL" id="AY122172">
    <property type="protein sequence ID" value="AAM52684.1"/>
    <property type="molecule type" value="mRNA"/>
</dbReference>
<dbReference type="RefSeq" id="NP_001245409.1">
    <property type="nucleotide sequence ID" value="NM_001258480.1"/>
</dbReference>
<dbReference type="RefSeq" id="NP_651906.1">
    <property type="nucleotide sequence ID" value="NM_143649.3"/>
</dbReference>
<dbReference type="RefSeq" id="NP_726542.1">
    <property type="nucleotide sequence ID" value="NM_166736.4"/>
</dbReference>
<dbReference type="RefSeq" id="NP_726543.1">
    <property type="nucleotide sequence ID" value="NM_166737.3"/>
</dbReference>
<dbReference type="RefSeq" id="NP_726544.1">
    <property type="nucleotide sequence ID" value="NM_166738.3"/>
</dbReference>
<dbReference type="RefSeq" id="NP_726546.1">
    <property type="nucleotide sequence ID" value="NM_166740.2"/>
</dbReference>
<dbReference type="SMR" id="Q7JUN3"/>
<dbReference type="FunCoup" id="Q7JUN3">
    <property type="interactions" value="390"/>
</dbReference>
<dbReference type="IntAct" id="Q7JUN3">
    <property type="interactions" value="5"/>
</dbReference>
<dbReference type="STRING" id="7227.FBpp0088215"/>
<dbReference type="PaxDb" id="7227-FBpp0088213"/>
<dbReference type="DNASU" id="43772"/>
<dbReference type="EnsemblMetazoa" id="FBtr0089146">
    <property type="protein sequence ID" value="FBpp0088213"/>
    <property type="gene ID" value="FBgn0039890"/>
</dbReference>
<dbReference type="EnsemblMetazoa" id="FBtr0089147">
    <property type="protein sequence ID" value="FBpp0088214"/>
    <property type="gene ID" value="FBgn0039890"/>
</dbReference>
<dbReference type="EnsemblMetazoa" id="FBtr0089148">
    <property type="protein sequence ID" value="FBpp0088215"/>
    <property type="gene ID" value="FBgn0039890"/>
</dbReference>
<dbReference type="EnsemblMetazoa" id="FBtr0089149">
    <property type="protein sequence ID" value="FBpp0088216"/>
    <property type="gene ID" value="FBgn0039890"/>
</dbReference>
<dbReference type="EnsemblMetazoa" id="FBtr0089150">
    <property type="protein sequence ID" value="FBpp0088217"/>
    <property type="gene ID" value="FBgn0039890"/>
</dbReference>
<dbReference type="EnsemblMetazoa" id="FBtr0308247">
    <property type="protein sequence ID" value="FBpp0300567"/>
    <property type="gene ID" value="FBgn0039890"/>
</dbReference>
<dbReference type="GeneID" id="43772"/>
<dbReference type="KEGG" id="dme:Dmel_CG2316"/>
<dbReference type="UCSC" id="CG2316-RA">
    <property type="organism name" value="d. melanogaster"/>
</dbReference>
<dbReference type="AGR" id="FB:FBgn0039890"/>
<dbReference type="CTD" id="215"/>
<dbReference type="FlyBase" id="FBgn0039890">
    <property type="gene designation" value="Abcd1"/>
</dbReference>
<dbReference type="VEuPathDB" id="VectorBase:FBgn0039890"/>
<dbReference type="eggNOG" id="KOG0064">
    <property type="taxonomic scope" value="Eukaryota"/>
</dbReference>
<dbReference type="GeneTree" id="ENSGT00950000182955"/>
<dbReference type="HOGENOM" id="CLU_007587_1_1_1"/>
<dbReference type="InParanoid" id="Q7JUN3"/>
<dbReference type="OMA" id="DIQAGHF"/>
<dbReference type="OrthoDB" id="422637at2759"/>
<dbReference type="PhylomeDB" id="Q7JUN3"/>
<dbReference type="Reactome" id="R-DME-1369062">
    <property type="pathway name" value="ABC transporters in lipid homeostasis"/>
</dbReference>
<dbReference type="Reactome" id="R-DME-2046105">
    <property type="pathway name" value="Linoleic acid (LA) metabolism"/>
</dbReference>
<dbReference type="Reactome" id="R-DME-2046106">
    <property type="pathway name" value="alpha-linolenic acid (ALA) metabolism"/>
</dbReference>
<dbReference type="Reactome" id="R-DME-390247">
    <property type="pathway name" value="Beta-oxidation of very long chain fatty acids"/>
</dbReference>
<dbReference type="Reactome" id="R-DME-9603798">
    <property type="pathway name" value="Class I peroxisomal membrane protein import"/>
</dbReference>
<dbReference type="SignaLink" id="Q7JUN3"/>
<dbReference type="BioGRID-ORCS" id="43772">
    <property type="hits" value="0 hits in 3 CRISPR screens"/>
</dbReference>
<dbReference type="GenomeRNAi" id="43772"/>
<dbReference type="PRO" id="PR:Q7JUN3"/>
<dbReference type="Proteomes" id="UP000000803">
    <property type="component" value="Chromosome 4"/>
</dbReference>
<dbReference type="Bgee" id="FBgn0039890">
    <property type="expression patterns" value="Expressed in enterocyte of posterior adult midgut epithelium (Drosophila) in digestive tract and 280 other cell types or tissues"/>
</dbReference>
<dbReference type="GO" id="GO:0005778">
    <property type="term" value="C:peroxisomal membrane"/>
    <property type="evidence" value="ECO:0000250"/>
    <property type="project" value="FlyBase"/>
</dbReference>
<dbReference type="GO" id="GO:0015607">
    <property type="term" value="F:ABC-type fatty-acyl-CoA transporter activity"/>
    <property type="evidence" value="ECO:0000250"/>
    <property type="project" value="FlyBase"/>
</dbReference>
<dbReference type="GO" id="GO:0005524">
    <property type="term" value="F:ATP binding"/>
    <property type="evidence" value="ECO:0000318"/>
    <property type="project" value="GO_Central"/>
</dbReference>
<dbReference type="GO" id="GO:0016887">
    <property type="term" value="F:ATP hydrolysis activity"/>
    <property type="evidence" value="ECO:0007669"/>
    <property type="project" value="InterPro"/>
</dbReference>
<dbReference type="GO" id="GO:0042626">
    <property type="term" value="F:ATPase-coupled transmembrane transporter activity"/>
    <property type="evidence" value="ECO:0000318"/>
    <property type="project" value="GO_Central"/>
</dbReference>
<dbReference type="GO" id="GO:0005324">
    <property type="term" value="F:long-chain fatty acid transmembrane transporter activity"/>
    <property type="evidence" value="ECO:0000250"/>
    <property type="project" value="FlyBase"/>
</dbReference>
<dbReference type="GO" id="GO:0006635">
    <property type="term" value="P:fatty acid beta-oxidation"/>
    <property type="evidence" value="ECO:0000318"/>
    <property type="project" value="GO_Central"/>
</dbReference>
<dbReference type="GO" id="GO:0015910">
    <property type="term" value="P:long-chain fatty acid import into peroxisome"/>
    <property type="evidence" value="ECO:0000250"/>
    <property type="project" value="FlyBase"/>
</dbReference>
<dbReference type="GO" id="GO:0001676">
    <property type="term" value="P:long-chain fatty acid metabolic process"/>
    <property type="evidence" value="ECO:0000315"/>
    <property type="project" value="UniProtKB"/>
</dbReference>
<dbReference type="GO" id="GO:0007031">
    <property type="term" value="P:peroxisome organization"/>
    <property type="evidence" value="ECO:0000318"/>
    <property type="project" value="GO_Central"/>
</dbReference>
<dbReference type="GO" id="GO:0042760">
    <property type="term" value="P:very long-chain fatty acid catabolic process"/>
    <property type="evidence" value="ECO:0000318"/>
    <property type="project" value="GO_Central"/>
</dbReference>
<dbReference type="CDD" id="cd03223">
    <property type="entry name" value="ABCD_peroxisomal_ALDP"/>
    <property type="match status" value="1"/>
</dbReference>
<dbReference type="FunFam" id="1.20.1560.10:FF:000312">
    <property type="entry name" value="ATP-binding cassette sub-family D member 2"/>
    <property type="match status" value="1"/>
</dbReference>
<dbReference type="FunFam" id="3.40.50.300:FF:000636">
    <property type="entry name" value="ATP-binding cassette sub-family D member 3"/>
    <property type="match status" value="1"/>
</dbReference>
<dbReference type="Gene3D" id="1.20.1560.10">
    <property type="entry name" value="ABC transporter type 1, transmembrane domain"/>
    <property type="match status" value="1"/>
</dbReference>
<dbReference type="Gene3D" id="3.40.50.300">
    <property type="entry name" value="P-loop containing nucleotide triphosphate hydrolases"/>
    <property type="match status" value="1"/>
</dbReference>
<dbReference type="InterPro" id="IPR003593">
    <property type="entry name" value="AAA+_ATPase"/>
</dbReference>
<dbReference type="InterPro" id="IPR011527">
    <property type="entry name" value="ABC1_TM_dom"/>
</dbReference>
<dbReference type="InterPro" id="IPR036640">
    <property type="entry name" value="ABC1_TM_sf"/>
</dbReference>
<dbReference type="InterPro" id="IPR003439">
    <property type="entry name" value="ABC_transporter-like_ATP-bd"/>
</dbReference>
<dbReference type="InterPro" id="IPR017871">
    <property type="entry name" value="ABC_transporter-like_CS"/>
</dbReference>
<dbReference type="InterPro" id="IPR050835">
    <property type="entry name" value="ABC_transporter_sub-D"/>
</dbReference>
<dbReference type="InterPro" id="IPR027417">
    <property type="entry name" value="P-loop_NTPase"/>
</dbReference>
<dbReference type="PANTHER" id="PTHR11384:SF67">
    <property type="entry name" value="ATP-BINDING CASSETTE SUB-FAMILY D MEMBER 1"/>
    <property type="match status" value="1"/>
</dbReference>
<dbReference type="PANTHER" id="PTHR11384">
    <property type="entry name" value="ATP-BINDING CASSETTE, SUB-FAMILY D MEMBER"/>
    <property type="match status" value="1"/>
</dbReference>
<dbReference type="Pfam" id="PF06472">
    <property type="entry name" value="ABC_membrane_2"/>
    <property type="match status" value="1"/>
</dbReference>
<dbReference type="Pfam" id="PF00005">
    <property type="entry name" value="ABC_tran"/>
    <property type="match status" value="1"/>
</dbReference>
<dbReference type="SMART" id="SM00382">
    <property type="entry name" value="AAA"/>
    <property type="match status" value="1"/>
</dbReference>
<dbReference type="SUPFAM" id="SSF90123">
    <property type="entry name" value="ABC transporter transmembrane region"/>
    <property type="match status" value="1"/>
</dbReference>
<dbReference type="SUPFAM" id="SSF52540">
    <property type="entry name" value="P-loop containing nucleoside triphosphate hydrolases"/>
    <property type="match status" value="1"/>
</dbReference>
<dbReference type="PROSITE" id="PS50929">
    <property type="entry name" value="ABC_TM1F"/>
    <property type="match status" value="1"/>
</dbReference>
<dbReference type="PROSITE" id="PS00211">
    <property type="entry name" value="ABC_TRANSPORTER_1"/>
    <property type="match status" value="1"/>
</dbReference>
<dbReference type="PROSITE" id="PS50893">
    <property type="entry name" value="ABC_TRANSPORTER_2"/>
    <property type="match status" value="1"/>
</dbReference>
<name>ABCD1_DROME</name>
<proteinExistence type="evidence at transcript level"/>
<gene>
    <name evidence="9" type="primary">Abcd1</name>
    <name evidence="6" type="synonym">ABCD</name>
    <name evidence="9" type="ORF">CG2316</name>
</gene>
<feature type="chain" id="PRO_0000447340" description="ATP-binding cassette sub-family D member 1" evidence="7">
    <location>
        <begin position="1"/>
        <end position="730"/>
    </location>
</feature>
<feature type="transmembrane region" description="Helical" evidence="2">
    <location>
        <begin position="24"/>
        <end position="44"/>
    </location>
</feature>
<feature type="transmembrane region" description="Helical" evidence="4">
    <location>
        <begin position="137"/>
        <end position="157"/>
    </location>
</feature>
<feature type="transmembrane region" description="Helical" evidence="4">
    <location>
        <begin position="169"/>
        <end position="189"/>
    </location>
</feature>
<feature type="transmembrane region" description="Helical" evidence="4">
    <location>
        <begin position="276"/>
        <end position="296"/>
    </location>
</feature>
<feature type="domain" description="ABC transmembrane type-1" evidence="4">
    <location>
        <begin position="136"/>
        <end position="373"/>
    </location>
</feature>
<feature type="domain" description="ABC transporter" evidence="3">
    <location>
        <begin position="505"/>
        <end position="727"/>
    </location>
</feature>
<feature type="binding site" evidence="3">
    <location>
        <begin position="538"/>
        <end position="545"/>
    </location>
    <ligand>
        <name>ATP</name>
        <dbReference type="ChEBI" id="CHEBI:30616"/>
    </ligand>
</feature>
<evidence type="ECO:0000250" key="1">
    <source>
        <dbReference type="UniProtKB" id="P33897"/>
    </source>
</evidence>
<evidence type="ECO:0000255" key="2"/>
<evidence type="ECO:0000255" key="3">
    <source>
        <dbReference type="PROSITE-ProRule" id="PRU00434"/>
    </source>
</evidence>
<evidence type="ECO:0000255" key="4">
    <source>
        <dbReference type="PROSITE-ProRule" id="PRU00441"/>
    </source>
</evidence>
<evidence type="ECO:0000269" key="5">
    <source>
    </source>
</evidence>
<evidence type="ECO:0000303" key="6">
    <source>
    </source>
</evidence>
<evidence type="ECO:0000305" key="7"/>
<evidence type="ECO:0000312" key="8">
    <source>
        <dbReference type="EMBL" id="AAM52684.1"/>
    </source>
</evidence>
<evidence type="ECO:0000312" key="9">
    <source>
        <dbReference type="FlyBase" id="FBgn0039890"/>
    </source>
</evidence>
<evidence type="ECO:0000312" key="10">
    <source>
        <dbReference type="Proteomes" id="UP000000803"/>
    </source>
</evidence>
<reference evidence="10" key="1">
    <citation type="journal article" date="2000" name="Science">
        <title>The genome sequence of Drosophila melanogaster.</title>
        <authorList>
            <person name="Adams M.D."/>
            <person name="Celniker S.E."/>
            <person name="Holt R.A."/>
            <person name="Evans C.A."/>
            <person name="Gocayne J.D."/>
            <person name="Amanatides P.G."/>
            <person name="Scherer S.E."/>
            <person name="Li P.W."/>
            <person name="Hoskins R.A."/>
            <person name="Galle R.F."/>
            <person name="George R.A."/>
            <person name="Lewis S.E."/>
            <person name="Richards S."/>
            <person name="Ashburner M."/>
            <person name="Henderson S.N."/>
            <person name="Sutton G.G."/>
            <person name="Wortman J.R."/>
            <person name="Yandell M.D."/>
            <person name="Zhang Q."/>
            <person name="Chen L.X."/>
            <person name="Brandon R.C."/>
            <person name="Rogers Y.-H.C."/>
            <person name="Blazej R.G."/>
            <person name="Champe M."/>
            <person name="Pfeiffer B.D."/>
            <person name="Wan K.H."/>
            <person name="Doyle C."/>
            <person name="Baxter E.G."/>
            <person name="Helt G."/>
            <person name="Nelson C.R."/>
            <person name="Miklos G.L.G."/>
            <person name="Abril J.F."/>
            <person name="Agbayani A."/>
            <person name="An H.-J."/>
            <person name="Andrews-Pfannkoch C."/>
            <person name="Baldwin D."/>
            <person name="Ballew R.M."/>
            <person name="Basu A."/>
            <person name="Baxendale J."/>
            <person name="Bayraktaroglu L."/>
            <person name="Beasley E.M."/>
            <person name="Beeson K.Y."/>
            <person name="Benos P.V."/>
            <person name="Berman B.P."/>
            <person name="Bhandari D."/>
            <person name="Bolshakov S."/>
            <person name="Borkova D."/>
            <person name="Botchan M.R."/>
            <person name="Bouck J."/>
            <person name="Brokstein P."/>
            <person name="Brottier P."/>
            <person name="Burtis K.C."/>
            <person name="Busam D.A."/>
            <person name="Butler H."/>
            <person name="Cadieu E."/>
            <person name="Center A."/>
            <person name="Chandra I."/>
            <person name="Cherry J.M."/>
            <person name="Cawley S."/>
            <person name="Dahlke C."/>
            <person name="Davenport L.B."/>
            <person name="Davies P."/>
            <person name="de Pablos B."/>
            <person name="Delcher A."/>
            <person name="Deng Z."/>
            <person name="Mays A.D."/>
            <person name="Dew I."/>
            <person name="Dietz S.M."/>
            <person name="Dodson K."/>
            <person name="Doup L.E."/>
            <person name="Downes M."/>
            <person name="Dugan-Rocha S."/>
            <person name="Dunkov B.C."/>
            <person name="Dunn P."/>
            <person name="Durbin K.J."/>
            <person name="Evangelista C.C."/>
            <person name="Ferraz C."/>
            <person name="Ferriera S."/>
            <person name="Fleischmann W."/>
            <person name="Fosler C."/>
            <person name="Gabrielian A.E."/>
            <person name="Garg N.S."/>
            <person name="Gelbart W.M."/>
            <person name="Glasser K."/>
            <person name="Glodek A."/>
            <person name="Gong F."/>
            <person name="Gorrell J.H."/>
            <person name="Gu Z."/>
            <person name="Guan P."/>
            <person name="Harris M."/>
            <person name="Harris N.L."/>
            <person name="Harvey D.A."/>
            <person name="Heiman T.J."/>
            <person name="Hernandez J.R."/>
            <person name="Houck J."/>
            <person name="Hostin D."/>
            <person name="Houston K.A."/>
            <person name="Howland T.J."/>
            <person name="Wei M.-H."/>
            <person name="Ibegwam C."/>
            <person name="Jalali M."/>
            <person name="Kalush F."/>
            <person name="Karpen G.H."/>
            <person name="Ke Z."/>
            <person name="Kennison J.A."/>
            <person name="Ketchum K.A."/>
            <person name="Kimmel B.E."/>
            <person name="Kodira C.D."/>
            <person name="Kraft C.L."/>
            <person name="Kravitz S."/>
            <person name="Kulp D."/>
            <person name="Lai Z."/>
            <person name="Lasko P."/>
            <person name="Lei Y."/>
            <person name="Levitsky A.A."/>
            <person name="Li J.H."/>
            <person name="Li Z."/>
            <person name="Liang Y."/>
            <person name="Lin X."/>
            <person name="Liu X."/>
            <person name="Mattei B."/>
            <person name="McIntosh T.C."/>
            <person name="McLeod M.P."/>
            <person name="McPherson D."/>
            <person name="Merkulov G."/>
            <person name="Milshina N.V."/>
            <person name="Mobarry C."/>
            <person name="Morris J."/>
            <person name="Moshrefi A."/>
            <person name="Mount S.M."/>
            <person name="Moy M."/>
            <person name="Murphy B."/>
            <person name="Murphy L."/>
            <person name="Muzny D.M."/>
            <person name="Nelson D.L."/>
            <person name="Nelson D.R."/>
            <person name="Nelson K.A."/>
            <person name="Nixon K."/>
            <person name="Nusskern D.R."/>
            <person name="Pacleb J.M."/>
            <person name="Palazzolo M."/>
            <person name="Pittman G.S."/>
            <person name="Pan S."/>
            <person name="Pollard J."/>
            <person name="Puri V."/>
            <person name="Reese M.G."/>
            <person name="Reinert K."/>
            <person name="Remington K."/>
            <person name="Saunders R.D.C."/>
            <person name="Scheeler F."/>
            <person name="Shen H."/>
            <person name="Shue B.C."/>
            <person name="Siden-Kiamos I."/>
            <person name="Simpson M."/>
            <person name="Skupski M.P."/>
            <person name="Smith T.J."/>
            <person name="Spier E."/>
            <person name="Spradling A.C."/>
            <person name="Stapleton M."/>
            <person name="Strong R."/>
            <person name="Sun E."/>
            <person name="Svirskas R."/>
            <person name="Tector C."/>
            <person name="Turner R."/>
            <person name="Venter E."/>
            <person name="Wang A.H."/>
            <person name="Wang X."/>
            <person name="Wang Z.-Y."/>
            <person name="Wassarman D.A."/>
            <person name="Weinstock G.M."/>
            <person name="Weissenbach J."/>
            <person name="Williams S.M."/>
            <person name="Woodage T."/>
            <person name="Worley K.C."/>
            <person name="Wu D."/>
            <person name="Yang S."/>
            <person name="Yao Q.A."/>
            <person name="Ye J."/>
            <person name="Yeh R.-F."/>
            <person name="Zaveri J.S."/>
            <person name="Zhan M."/>
            <person name="Zhang G."/>
            <person name="Zhao Q."/>
            <person name="Zheng L."/>
            <person name="Zheng X.H."/>
            <person name="Zhong F.N."/>
            <person name="Zhong W."/>
            <person name="Zhou X."/>
            <person name="Zhu S.C."/>
            <person name="Zhu X."/>
            <person name="Smith H.O."/>
            <person name="Gibbs R.A."/>
            <person name="Myers E.W."/>
            <person name="Rubin G.M."/>
            <person name="Venter J.C."/>
        </authorList>
    </citation>
    <scope>NUCLEOTIDE SEQUENCE [LARGE SCALE GENOMIC DNA]</scope>
    <source>
        <strain evidence="10">Berkeley</strain>
    </source>
</reference>
<reference evidence="10" key="2">
    <citation type="journal article" date="2002" name="Genome Biol.">
        <title>Annotation of the Drosophila melanogaster euchromatic genome: a systematic review.</title>
        <authorList>
            <person name="Misra S."/>
            <person name="Crosby M.A."/>
            <person name="Mungall C.J."/>
            <person name="Matthews B.B."/>
            <person name="Campbell K.S."/>
            <person name="Hradecky P."/>
            <person name="Huang Y."/>
            <person name="Kaminker J.S."/>
            <person name="Millburn G.H."/>
            <person name="Prochnik S.E."/>
            <person name="Smith C.D."/>
            <person name="Tupy J.L."/>
            <person name="Whitfield E.J."/>
            <person name="Bayraktaroglu L."/>
            <person name="Berman B.P."/>
            <person name="Bettencourt B.R."/>
            <person name="Celniker S.E."/>
            <person name="de Grey A.D.N.J."/>
            <person name="Drysdale R.A."/>
            <person name="Harris N.L."/>
            <person name="Richter J."/>
            <person name="Russo S."/>
            <person name="Schroeder A.J."/>
            <person name="Shu S.Q."/>
            <person name="Stapleton M."/>
            <person name="Yamada C."/>
            <person name="Ashburner M."/>
            <person name="Gelbart W.M."/>
            <person name="Rubin G.M."/>
            <person name="Lewis S.E."/>
        </authorList>
    </citation>
    <scope>GENOME REANNOTATION</scope>
    <source>
        <strain evidence="10">Berkeley</strain>
    </source>
</reference>
<reference evidence="8" key="3">
    <citation type="journal article" date="2002" name="Genome Biol.">
        <title>A Drosophila full-length cDNA resource.</title>
        <authorList>
            <person name="Stapleton M."/>
            <person name="Carlson J.W."/>
            <person name="Brokstein P."/>
            <person name="Yu C."/>
            <person name="Champe M."/>
            <person name="George R.A."/>
            <person name="Guarin H."/>
            <person name="Kronmiller B."/>
            <person name="Pacleb J.M."/>
            <person name="Park S."/>
            <person name="Wan K.H."/>
            <person name="Rubin G.M."/>
            <person name="Celniker S.E."/>
        </authorList>
    </citation>
    <scope>NUCLEOTIDE SEQUENCE [LARGE SCALE MRNA]</scope>
    <source>
        <strain evidence="8">Berkeley</strain>
        <tissue evidence="8">Embryo</tissue>
    </source>
</reference>
<reference evidence="7" key="4">
    <citation type="journal article" date="2018" name="Dis. Model. Mech.">
        <title>Etiology and treatment of adrenoleukodystrophy: new insights from Drosophila.</title>
        <authorList>
            <person name="Gordon H.B."/>
            <person name="Valdez L."/>
            <person name="Letsou A."/>
        </authorList>
    </citation>
    <scope>DISRUPTION PHENOTYPE</scope>
</reference>
<organism evidence="10">
    <name type="scientific">Drosophila melanogaster</name>
    <name type="common">Fruit fly</name>
    <dbReference type="NCBI Taxonomy" id="7227"/>
    <lineage>
        <taxon>Eukaryota</taxon>
        <taxon>Metazoa</taxon>
        <taxon>Ecdysozoa</taxon>
        <taxon>Arthropoda</taxon>
        <taxon>Hexapoda</taxon>
        <taxon>Insecta</taxon>
        <taxon>Pterygota</taxon>
        <taxon>Neoptera</taxon>
        <taxon>Endopterygota</taxon>
        <taxon>Diptera</taxon>
        <taxon>Brachycera</taxon>
        <taxon>Muscomorpha</taxon>
        <taxon>Ephydroidea</taxon>
        <taxon>Drosophilidae</taxon>
        <taxon>Drosophila</taxon>
        <taxon>Sophophora</taxon>
    </lineage>
</organism>
<protein>
    <recommendedName>
        <fullName evidence="9">ATP-binding cassette sub-family D member 1</fullName>
        <ecNumber evidence="1">7.6.2.4</ecNumber>
    </recommendedName>
</protein>